<proteinExistence type="inferred from homology"/>
<accession>B7HDU0</accession>
<dbReference type="EMBL" id="CP001176">
    <property type="protein sequence ID" value="ACK63803.1"/>
    <property type="molecule type" value="Genomic_DNA"/>
</dbReference>
<dbReference type="RefSeq" id="WP_000359096.1">
    <property type="nucleotide sequence ID" value="NZ_VEHB01000002.1"/>
</dbReference>
<dbReference type="SMR" id="B7HDU0"/>
<dbReference type="KEGG" id="bcb:BCB4264_A3915"/>
<dbReference type="HOGENOM" id="CLU_070525_2_0_9"/>
<dbReference type="Proteomes" id="UP000007096">
    <property type="component" value="Chromosome"/>
</dbReference>
<dbReference type="GO" id="GO:0005829">
    <property type="term" value="C:cytosol"/>
    <property type="evidence" value="ECO:0007669"/>
    <property type="project" value="TreeGrafter"/>
</dbReference>
<dbReference type="GO" id="GO:0000028">
    <property type="term" value="P:ribosomal small subunit assembly"/>
    <property type="evidence" value="ECO:0007669"/>
    <property type="project" value="TreeGrafter"/>
</dbReference>
<dbReference type="GO" id="GO:0006412">
    <property type="term" value="P:translation"/>
    <property type="evidence" value="ECO:0007669"/>
    <property type="project" value="TreeGrafter"/>
</dbReference>
<dbReference type="CDD" id="cd01734">
    <property type="entry name" value="YlxS_C"/>
    <property type="match status" value="1"/>
</dbReference>
<dbReference type="FunFam" id="2.30.30.180:FF:000002">
    <property type="entry name" value="Ribosome maturation factor RimP"/>
    <property type="match status" value="1"/>
</dbReference>
<dbReference type="FunFam" id="3.30.300.70:FF:000001">
    <property type="entry name" value="Ribosome maturation factor RimP"/>
    <property type="match status" value="1"/>
</dbReference>
<dbReference type="Gene3D" id="2.30.30.180">
    <property type="entry name" value="Ribosome maturation factor RimP, C-terminal domain"/>
    <property type="match status" value="1"/>
</dbReference>
<dbReference type="Gene3D" id="3.30.300.70">
    <property type="entry name" value="RimP-like superfamily, N-terminal"/>
    <property type="match status" value="1"/>
</dbReference>
<dbReference type="HAMAP" id="MF_01077">
    <property type="entry name" value="RimP"/>
    <property type="match status" value="1"/>
</dbReference>
<dbReference type="InterPro" id="IPR003728">
    <property type="entry name" value="Ribosome_maturation_RimP"/>
</dbReference>
<dbReference type="InterPro" id="IPR028998">
    <property type="entry name" value="RimP_C"/>
</dbReference>
<dbReference type="InterPro" id="IPR036847">
    <property type="entry name" value="RimP_C_sf"/>
</dbReference>
<dbReference type="InterPro" id="IPR028989">
    <property type="entry name" value="RimP_N"/>
</dbReference>
<dbReference type="InterPro" id="IPR035956">
    <property type="entry name" value="RimP_N_sf"/>
</dbReference>
<dbReference type="NCBIfam" id="NF000928">
    <property type="entry name" value="PRK00092.1-2"/>
    <property type="match status" value="1"/>
</dbReference>
<dbReference type="PANTHER" id="PTHR33867">
    <property type="entry name" value="RIBOSOME MATURATION FACTOR RIMP"/>
    <property type="match status" value="1"/>
</dbReference>
<dbReference type="PANTHER" id="PTHR33867:SF1">
    <property type="entry name" value="RIBOSOME MATURATION FACTOR RIMP"/>
    <property type="match status" value="1"/>
</dbReference>
<dbReference type="Pfam" id="PF17384">
    <property type="entry name" value="DUF150_C"/>
    <property type="match status" value="1"/>
</dbReference>
<dbReference type="Pfam" id="PF02576">
    <property type="entry name" value="RimP_N"/>
    <property type="match status" value="1"/>
</dbReference>
<dbReference type="SUPFAM" id="SSF74942">
    <property type="entry name" value="YhbC-like, C-terminal domain"/>
    <property type="match status" value="1"/>
</dbReference>
<dbReference type="SUPFAM" id="SSF75420">
    <property type="entry name" value="YhbC-like, N-terminal domain"/>
    <property type="match status" value="1"/>
</dbReference>
<name>RIMP_BACC4</name>
<feature type="chain" id="PRO_1000136732" description="Ribosome maturation factor RimP">
    <location>
        <begin position="1"/>
        <end position="156"/>
    </location>
</feature>
<sequence length="156" mass="17668">MDKKVTEVVEAFAQPIVEELNLELVDVEYVKEGQDWFLRVFIDSEKGVDIEECGAVSERLSEALDKEDPIPHLYFLDVSSPGAERPLKKEKDFQQAVGKQVAIKTYEPIDGEKMFEGKLLSYDGTTITLLLTIKTRKKEIQISMDKVANARLAVTF</sequence>
<organism>
    <name type="scientific">Bacillus cereus (strain B4264)</name>
    <dbReference type="NCBI Taxonomy" id="405532"/>
    <lineage>
        <taxon>Bacteria</taxon>
        <taxon>Bacillati</taxon>
        <taxon>Bacillota</taxon>
        <taxon>Bacilli</taxon>
        <taxon>Bacillales</taxon>
        <taxon>Bacillaceae</taxon>
        <taxon>Bacillus</taxon>
        <taxon>Bacillus cereus group</taxon>
    </lineage>
</organism>
<reference key="1">
    <citation type="submission" date="2008-10" db="EMBL/GenBank/DDBJ databases">
        <title>Genome sequence of Bacillus cereus B4264.</title>
        <authorList>
            <person name="Dodson R.J."/>
            <person name="Durkin A.S."/>
            <person name="Rosovitz M.J."/>
            <person name="Rasko D.A."/>
            <person name="Hoffmaster A."/>
            <person name="Ravel J."/>
            <person name="Sutton G."/>
        </authorList>
    </citation>
    <scope>NUCLEOTIDE SEQUENCE [LARGE SCALE GENOMIC DNA]</scope>
    <source>
        <strain>B4264</strain>
    </source>
</reference>
<keyword id="KW-0963">Cytoplasm</keyword>
<keyword id="KW-0690">Ribosome biogenesis</keyword>
<evidence type="ECO:0000255" key="1">
    <source>
        <dbReference type="HAMAP-Rule" id="MF_01077"/>
    </source>
</evidence>
<protein>
    <recommendedName>
        <fullName evidence="1">Ribosome maturation factor RimP</fullName>
    </recommendedName>
</protein>
<gene>
    <name evidence="1" type="primary">rimP</name>
    <name type="ordered locus">BCB4264_A3915</name>
</gene>
<comment type="function">
    <text evidence="1">Required for maturation of 30S ribosomal subunits.</text>
</comment>
<comment type="subcellular location">
    <subcellularLocation>
        <location evidence="1">Cytoplasm</location>
    </subcellularLocation>
</comment>
<comment type="similarity">
    <text evidence="1">Belongs to the RimP family.</text>
</comment>